<reference key="1">
    <citation type="journal article" date="2003" name="Proc. Natl. Acad. Sci. U.S.A.">
        <title>Complete genome sequence of the Q-fever pathogen, Coxiella burnetii.</title>
        <authorList>
            <person name="Seshadri R."/>
            <person name="Paulsen I.T."/>
            <person name="Eisen J.A."/>
            <person name="Read T.D."/>
            <person name="Nelson K.E."/>
            <person name="Nelson W.C."/>
            <person name="Ward N.L."/>
            <person name="Tettelin H."/>
            <person name="Davidsen T.M."/>
            <person name="Beanan M.J."/>
            <person name="DeBoy R.T."/>
            <person name="Daugherty S.C."/>
            <person name="Brinkac L.M."/>
            <person name="Madupu R."/>
            <person name="Dodson R.J."/>
            <person name="Khouri H.M."/>
            <person name="Lee K.H."/>
            <person name="Carty H.A."/>
            <person name="Scanlan D."/>
            <person name="Heinzen R.A."/>
            <person name="Thompson H.A."/>
            <person name="Samuel J.E."/>
            <person name="Fraser C.M."/>
            <person name="Heidelberg J.F."/>
        </authorList>
    </citation>
    <scope>NUCLEOTIDE SEQUENCE [LARGE SCALE GENOMIC DNA]</scope>
    <source>
        <strain>RSA 493 / Nine Mile phase I</strain>
    </source>
</reference>
<protein>
    <recommendedName>
        <fullName evidence="1">Small ribosomal subunit protein uS5</fullName>
    </recommendedName>
    <alternativeName>
        <fullName evidence="2">30S ribosomal protein S5</fullName>
    </alternativeName>
</protein>
<gene>
    <name evidence="1" type="primary">rpsE</name>
    <name type="ordered locus">CBU_0255</name>
</gene>
<keyword id="KW-1185">Reference proteome</keyword>
<keyword id="KW-0687">Ribonucleoprotein</keyword>
<keyword id="KW-0689">Ribosomal protein</keyword>
<keyword id="KW-0694">RNA-binding</keyword>
<keyword id="KW-0699">rRNA-binding</keyword>
<accession>Q83EQ9</accession>
<comment type="function">
    <text evidence="1">With S4 and S12 plays an important role in translational accuracy.</text>
</comment>
<comment type="function">
    <text evidence="1">Located at the back of the 30S subunit body where it stabilizes the conformation of the head with respect to the body.</text>
</comment>
<comment type="subunit">
    <text evidence="1">Part of the 30S ribosomal subunit. Contacts proteins S4 and S8.</text>
</comment>
<comment type="domain">
    <text>The N-terminal domain interacts with the head of the 30S subunit; the C-terminal domain interacts with the body and contacts protein S4. The interaction surface between S4 and S5 is involved in control of translational fidelity.</text>
</comment>
<comment type="similarity">
    <text evidence="1">Belongs to the universal ribosomal protein uS5 family.</text>
</comment>
<sequence>MQEAGIGTTTDGIQEKLVAVRRTAKVVKGGRVFGFSALVVAGDGDGKVGFGLGKAREVPSAIQKATENARRNMISVPLYGATLHHAIKATHASSTVLMLPASEGTGVIAGNAMRAIFEVMGVQNVLAKCIGSSNPINVVRATFKGLKQMETPESVAAKRGKAIEEIVE</sequence>
<name>RS5_COXBU</name>
<evidence type="ECO:0000255" key="1">
    <source>
        <dbReference type="HAMAP-Rule" id="MF_01307"/>
    </source>
</evidence>
<evidence type="ECO:0000305" key="2"/>
<organism>
    <name type="scientific">Coxiella burnetii (strain RSA 493 / Nine Mile phase I)</name>
    <dbReference type="NCBI Taxonomy" id="227377"/>
    <lineage>
        <taxon>Bacteria</taxon>
        <taxon>Pseudomonadati</taxon>
        <taxon>Pseudomonadota</taxon>
        <taxon>Gammaproteobacteria</taxon>
        <taxon>Legionellales</taxon>
        <taxon>Coxiellaceae</taxon>
        <taxon>Coxiella</taxon>
    </lineage>
</organism>
<dbReference type="EMBL" id="AE016828">
    <property type="protein sequence ID" value="AAO89813.1"/>
    <property type="molecule type" value="Genomic_DNA"/>
</dbReference>
<dbReference type="RefSeq" id="NP_819299.1">
    <property type="nucleotide sequence ID" value="NC_002971.4"/>
</dbReference>
<dbReference type="RefSeq" id="WP_005771515.1">
    <property type="nucleotide sequence ID" value="NC_002971.4"/>
</dbReference>
<dbReference type="SMR" id="Q83EQ9"/>
<dbReference type="STRING" id="227377.CBU_0255"/>
<dbReference type="EnsemblBacteria" id="AAO89813">
    <property type="protein sequence ID" value="AAO89813"/>
    <property type="gene ID" value="CBU_0255"/>
</dbReference>
<dbReference type="GeneID" id="1208136"/>
<dbReference type="KEGG" id="cbu:CBU_0255"/>
<dbReference type="PATRIC" id="fig|227377.7.peg.250"/>
<dbReference type="eggNOG" id="COG0098">
    <property type="taxonomic scope" value="Bacteria"/>
</dbReference>
<dbReference type="HOGENOM" id="CLU_065898_2_2_6"/>
<dbReference type="OrthoDB" id="9809045at2"/>
<dbReference type="Proteomes" id="UP000002671">
    <property type="component" value="Chromosome"/>
</dbReference>
<dbReference type="GO" id="GO:0015935">
    <property type="term" value="C:small ribosomal subunit"/>
    <property type="evidence" value="ECO:0007669"/>
    <property type="project" value="InterPro"/>
</dbReference>
<dbReference type="GO" id="GO:0019843">
    <property type="term" value="F:rRNA binding"/>
    <property type="evidence" value="ECO:0007669"/>
    <property type="project" value="UniProtKB-UniRule"/>
</dbReference>
<dbReference type="GO" id="GO:0003735">
    <property type="term" value="F:structural constituent of ribosome"/>
    <property type="evidence" value="ECO:0007669"/>
    <property type="project" value="InterPro"/>
</dbReference>
<dbReference type="GO" id="GO:0006412">
    <property type="term" value="P:translation"/>
    <property type="evidence" value="ECO:0007669"/>
    <property type="project" value="UniProtKB-UniRule"/>
</dbReference>
<dbReference type="FunFam" id="3.30.160.20:FF:000001">
    <property type="entry name" value="30S ribosomal protein S5"/>
    <property type="match status" value="1"/>
</dbReference>
<dbReference type="FunFam" id="3.30.230.10:FF:000002">
    <property type="entry name" value="30S ribosomal protein S5"/>
    <property type="match status" value="1"/>
</dbReference>
<dbReference type="Gene3D" id="3.30.160.20">
    <property type="match status" value="1"/>
</dbReference>
<dbReference type="Gene3D" id="3.30.230.10">
    <property type="match status" value="1"/>
</dbReference>
<dbReference type="HAMAP" id="MF_01307_B">
    <property type="entry name" value="Ribosomal_uS5_B"/>
    <property type="match status" value="1"/>
</dbReference>
<dbReference type="InterPro" id="IPR020568">
    <property type="entry name" value="Ribosomal_Su5_D2-typ_SF"/>
</dbReference>
<dbReference type="InterPro" id="IPR000851">
    <property type="entry name" value="Ribosomal_uS5"/>
</dbReference>
<dbReference type="InterPro" id="IPR005712">
    <property type="entry name" value="Ribosomal_uS5_bac-type"/>
</dbReference>
<dbReference type="InterPro" id="IPR005324">
    <property type="entry name" value="Ribosomal_uS5_C"/>
</dbReference>
<dbReference type="InterPro" id="IPR013810">
    <property type="entry name" value="Ribosomal_uS5_N"/>
</dbReference>
<dbReference type="InterPro" id="IPR018192">
    <property type="entry name" value="Ribosomal_uS5_N_CS"/>
</dbReference>
<dbReference type="InterPro" id="IPR014721">
    <property type="entry name" value="Ribsml_uS5_D2-typ_fold_subgr"/>
</dbReference>
<dbReference type="NCBIfam" id="TIGR01021">
    <property type="entry name" value="rpsE_bact"/>
    <property type="match status" value="1"/>
</dbReference>
<dbReference type="PANTHER" id="PTHR48277">
    <property type="entry name" value="MITOCHONDRIAL RIBOSOMAL PROTEIN S5"/>
    <property type="match status" value="1"/>
</dbReference>
<dbReference type="PANTHER" id="PTHR48277:SF1">
    <property type="entry name" value="MITOCHONDRIAL RIBOSOMAL PROTEIN S5"/>
    <property type="match status" value="1"/>
</dbReference>
<dbReference type="Pfam" id="PF00333">
    <property type="entry name" value="Ribosomal_S5"/>
    <property type="match status" value="1"/>
</dbReference>
<dbReference type="Pfam" id="PF03719">
    <property type="entry name" value="Ribosomal_S5_C"/>
    <property type="match status" value="1"/>
</dbReference>
<dbReference type="SUPFAM" id="SSF54768">
    <property type="entry name" value="dsRNA-binding domain-like"/>
    <property type="match status" value="1"/>
</dbReference>
<dbReference type="SUPFAM" id="SSF54211">
    <property type="entry name" value="Ribosomal protein S5 domain 2-like"/>
    <property type="match status" value="1"/>
</dbReference>
<dbReference type="PROSITE" id="PS00585">
    <property type="entry name" value="RIBOSOMAL_S5"/>
    <property type="match status" value="1"/>
</dbReference>
<dbReference type="PROSITE" id="PS50881">
    <property type="entry name" value="S5_DSRBD"/>
    <property type="match status" value="1"/>
</dbReference>
<feature type="chain" id="PRO_0000131507" description="Small ribosomal subunit protein uS5">
    <location>
        <begin position="1"/>
        <end position="168"/>
    </location>
</feature>
<feature type="domain" description="S5 DRBM" evidence="1">
    <location>
        <begin position="13"/>
        <end position="76"/>
    </location>
</feature>
<proteinExistence type="inferred from homology"/>